<organism>
    <name type="scientific">Bacillus licheniformis (strain ATCC 14580 / DSM 13 / JCM 2505 / CCUG 7422 / NBRC 12200 / NCIMB 9375 / NCTC 10341 / NRRL NRS-1264 / Gibson 46)</name>
    <dbReference type="NCBI Taxonomy" id="279010"/>
    <lineage>
        <taxon>Bacteria</taxon>
        <taxon>Bacillati</taxon>
        <taxon>Bacillota</taxon>
        <taxon>Bacilli</taxon>
        <taxon>Bacillales</taxon>
        <taxon>Bacillaceae</taxon>
        <taxon>Bacillus</taxon>
    </lineage>
</organism>
<dbReference type="EC" id="1.6.5.-" evidence="1"/>
<dbReference type="EC" id="1.7.1.17" evidence="1"/>
<dbReference type="EMBL" id="AE017333">
    <property type="protein sequence ID" value="AAU42398.1"/>
    <property type="molecule type" value="Genomic_DNA"/>
</dbReference>
<dbReference type="EMBL" id="CP000002">
    <property type="protein sequence ID" value="AAU25027.1"/>
    <property type="molecule type" value="Genomic_DNA"/>
</dbReference>
<dbReference type="RefSeq" id="WP_003185281.1">
    <property type="nucleotide sequence ID" value="NC_006322.1"/>
</dbReference>
<dbReference type="SMR" id="Q65EW6"/>
<dbReference type="STRING" id="279010.BL00833"/>
<dbReference type="KEGG" id="bld:BLi03573"/>
<dbReference type="KEGG" id="bli:BL00833"/>
<dbReference type="eggNOG" id="COG1182">
    <property type="taxonomic scope" value="Bacteria"/>
</dbReference>
<dbReference type="HOGENOM" id="CLU_088964_3_1_9"/>
<dbReference type="Proteomes" id="UP000000606">
    <property type="component" value="Chromosome"/>
</dbReference>
<dbReference type="GO" id="GO:0009055">
    <property type="term" value="F:electron transfer activity"/>
    <property type="evidence" value="ECO:0007669"/>
    <property type="project" value="UniProtKB-UniRule"/>
</dbReference>
<dbReference type="GO" id="GO:0010181">
    <property type="term" value="F:FMN binding"/>
    <property type="evidence" value="ECO:0007669"/>
    <property type="project" value="UniProtKB-UniRule"/>
</dbReference>
<dbReference type="GO" id="GO:0016652">
    <property type="term" value="F:oxidoreductase activity, acting on NAD(P)H as acceptor"/>
    <property type="evidence" value="ECO:0007669"/>
    <property type="project" value="UniProtKB-UniRule"/>
</dbReference>
<dbReference type="GO" id="GO:0016655">
    <property type="term" value="F:oxidoreductase activity, acting on NAD(P)H, quinone or similar compound as acceptor"/>
    <property type="evidence" value="ECO:0007669"/>
    <property type="project" value="InterPro"/>
</dbReference>
<dbReference type="Gene3D" id="3.40.50.360">
    <property type="match status" value="1"/>
</dbReference>
<dbReference type="HAMAP" id="MF_01216">
    <property type="entry name" value="Azoreductase_type1"/>
    <property type="match status" value="1"/>
</dbReference>
<dbReference type="InterPro" id="IPR003680">
    <property type="entry name" value="Flavodoxin_fold"/>
</dbReference>
<dbReference type="InterPro" id="IPR029039">
    <property type="entry name" value="Flavoprotein-like_sf"/>
</dbReference>
<dbReference type="InterPro" id="IPR050104">
    <property type="entry name" value="FMN-dep_NADH:Q_OxRdtase_AzoR1"/>
</dbReference>
<dbReference type="InterPro" id="IPR023048">
    <property type="entry name" value="NADH:quinone_OxRdtase_FMN_depd"/>
</dbReference>
<dbReference type="NCBIfam" id="NF010075">
    <property type="entry name" value="PRK13556.1"/>
    <property type="match status" value="1"/>
</dbReference>
<dbReference type="PANTHER" id="PTHR43741">
    <property type="entry name" value="FMN-DEPENDENT NADH-AZOREDUCTASE 1"/>
    <property type="match status" value="1"/>
</dbReference>
<dbReference type="PANTHER" id="PTHR43741:SF7">
    <property type="entry name" value="FMN-DEPENDENT NADH:QUINONE OXIDOREDUCTASE"/>
    <property type="match status" value="1"/>
</dbReference>
<dbReference type="Pfam" id="PF02525">
    <property type="entry name" value="Flavodoxin_2"/>
    <property type="match status" value="1"/>
</dbReference>
<dbReference type="SUPFAM" id="SSF52218">
    <property type="entry name" value="Flavoproteins"/>
    <property type="match status" value="1"/>
</dbReference>
<sequence>MTKTLYITAHPHDERASYSMAAGKAFIESYKEAHPDDEVIHLDLYRENIPQIDADVFSGWGKLQSGSGFEQLSEHEKAKVGRLNELSEQFIAGDKYVFVTPLWNFSFPPVMKAYFDAVAVAGKTFKYTEQGPIGLLTDKKALHIQARGGYYSEGQAAELEMGHRYISIMMQFFGVPEFEGLFIEGHNAEPDKAEEIKQNAIVRAKELGRTF</sequence>
<evidence type="ECO:0000255" key="1">
    <source>
        <dbReference type="HAMAP-Rule" id="MF_01216"/>
    </source>
</evidence>
<comment type="function">
    <text evidence="1">Quinone reductase that provides resistance to thiol-specific stress caused by electrophilic quinones.</text>
</comment>
<comment type="function">
    <text evidence="1">Also exhibits azoreductase activity. Catalyzes the reductive cleavage of the azo bond in aromatic azo compounds to the corresponding amines.</text>
</comment>
<comment type="catalytic activity">
    <reaction evidence="1">
        <text>2 a quinone + NADH + H(+) = 2 a 1,4-benzosemiquinone + NAD(+)</text>
        <dbReference type="Rhea" id="RHEA:65952"/>
        <dbReference type="ChEBI" id="CHEBI:15378"/>
        <dbReference type="ChEBI" id="CHEBI:57540"/>
        <dbReference type="ChEBI" id="CHEBI:57945"/>
        <dbReference type="ChEBI" id="CHEBI:132124"/>
        <dbReference type="ChEBI" id="CHEBI:134225"/>
    </reaction>
</comment>
<comment type="catalytic activity">
    <reaction evidence="1">
        <text>N,N-dimethyl-1,4-phenylenediamine + anthranilate + 2 NAD(+) = 2-(4-dimethylaminophenyl)diazenylbenzoate + 2 NADH + 2 H(+)</text>
        <dbReference type="Rhea" id="RHEA:55872"/>
        <dbReference type="ChEBI" id="CHEBI:15378"/>
        <dbReference type="ChEBI" id="CHEBI:15783"/>
        <dbReference type="ChEBI" id="CHEBI:16567"/>
        <dbReference type="ChEBI" id="CHEBI:57540"/>
        <dbReference type="ChEBI" id="CHEBI:57945"/>
        <dbReference type="ChEBI" id="CHEBI:71579"/>
        <dbReference type="EC" id="1.7.1.17"/>
    </reaction>
</comment>
<comment type="cofactor">
    <cofactor evidence="1">
        <name>FMN</name>
        <dbReference type="ChEBI" id="CHEBI:58210"/>
    </cofactor>
    <text evidence="1">Binds 1 FMN per subunit.</text>
</comment>
<comment type="subunit">
    <text evidence="1">Homodimer.</text>
</comment>
<comment type="similarity">
    <text evidence="1">Belongs to the azoreductase type 1 family.</text>
</comment>
<feature type="chain" id="PRO_0000245890" description="FMN-dependent NADH:quinone oxidoreductase 2">
    <location>
        <begin position="1"/>
        <end position="211"/>
    </location>
</feature>
<feature type="binding site" evidence="1">
    <location>
        <begin position="17"/>
        <end position="19"/>
    </location>
    <ligand>
        <name>FMN</name>
        <dbReference type="ChEBI" id="CHEBI:58210"/>
    </ligand>
</feature>
<protein>
    <recommendedName>
        <fullName evidence="1">FMN-dependent NADH:quinone oxidoreductase 2</fullName>
        <ecNumber evidence="1">1.6.5.-</ecNumber>
    </recommendedName>
    <alternativeName>
        <fullName evidence="1">Azo-dye reductase 2</fullName>
    </alternativeName>
    <alternativeName>
        <fullName evidence="1">FMN-dependent NADH-azo compound oxidoreductase 2</fullName>
    </alternativeName>
    <alternativeName>
        <fullName evidence="1">FMN-dependent NADH-azoreductase 2</fullName>
        <ecNumber evidence="1">1.7.1.17</ecNumber>
    </alternativeName>
</protein>
<accession>Q65EW6</accession>
<accession>Q62QD3</accession>
<reference key="1">
    <citation type="journal article" date="2004" name="J. Mol. Microbiol. Biotechnol.">
        <title>The complete genome sequence of Bacillus licheniformis DSM13, an organism with great industrial potential.</title>
        <authorList>
            <person name="Veith B."/>
            <person name="Herzberg C."/>
            <person name="Steckel S."/>
            <person name="Feesche J."/>
            <person name="Maurer K.H."/>
            <person name="Ehrenreich P."/>
            <person name="Baeumer S."/>
            <person name="Henne A."/>
            <person name="Liesegang H."/>
            <person name="Merkl R."/>
            <person name="Ehrenreich A."/>
            <person name="Gottschalk G."/>
        </authorList>
    </citation>
    <scope>NUCLEOTIDE SEQUENCE [LARGE SCALE GENOMIC DNA]</scope>
    <source>
        <strain>ATCC 14580 / DSM 13 / JCM 2505 / CCUG 7422 / NBRC 12200 / NCIMB 9375 / NCTC 10341 / NRRL NRS-1264 / Gibson 46</strain>
    </source>
</reference>
<reference key="2">
    <citation type="journal article" date="2004" name="Genome Biol.">
        <title>Complete genome sequence of the industrial bacterium Bacillus licheniformis and comparisons with closely related Bacillus species.</title>
        <authorList>
            <person name="Rey M.W."/>
            <person name="Ramaiya P."/>
            <person name="Nelson B.A."/>
            <person name="Brody-Karpin S.D."/>
            <person name="Zaretsky E.J."/>
            <person name="Tang M."/>
            <person name="Lopez de Leon A."/>
            <person name="Xiang H."/>
            <person name="Gusti V."/>
            <person name="Clausen I.G."/>
            <person name="Olsen P.B."/>
            <person name="Rasmussen M.D."/>
            <person name="Andersen J.T."/>
            <person name="Joergensen P.L."/>
            <person name="Larsen T.S."/>
            <person name="Sorokin A."/>
            <person name="Bolotin A."/>
            <person name="Lapidus A."/>
            <person name="Galleron N."/>
            <person name="Ehrlich S.D."/>
            <person name="Berka R.M."/>
        </authorList>
    </citation>
    <scope>NUCLEOTIDE SEQUENCE [LARGE SCALE GENOMIC DNA]</scope>
    <source>
        <strain>ATCC 14580 / DSM 13 / JCM 2505 / CCUG 7422 / NBRC 12200 / NCIMB 9375 / NCTC 10341 / NRRL NRS-1264 / Gibson 46</strain>
    </source>
</reference>
<name>AZOR2_BACLD</name>
<gene>
    <name evidence="1" type="primary">azoR2</name>
    <name type="ordered locus">BLi03573</name>
    <name type="ordered locus">BL00833</name>
</gene>
<proteinExistence type="inferred from homology"/>
<keyword id="KW-0285">Flavoprotein</keyword>
<keyword id="KW-0288">FMN</keyword>
<keyword id="KW-0520">NAD</keyword>
<keyword id="KW-0560">Oxidoreductase</keyword>
<keyword id="KW-1185">Reference proteome</keyword>